<reference key="1">
    <citation type="journal article" date="1997" name="Oncogene">
        <title>Human small Maf proteins form heterodimers with CNC family transcription factors and recognize the NF-E2 motif.</title>
        <authorList>
            <person name="Toki T."/>
            <person name="Itoh J."/>
            <person name="Kitazawa J."/>
            <person name="Arai K."/>
            <person name="Hatakeyama K."/>
            <person name="Akasaka J."/>
            <person name="Igarashi K."/>
            <person name="Nomura N."/>
            <person name="Yokoyama M."/>
            <person name="Yamamoto M."/>
            <person name="Ito E."/>
        </authorList>
    </citation>
    <scope>NUCLEOTIDE SEQUENCE [MRNA]</scope>
    <scope>FUNCTION IN TRANSCRIPTION</scope>
    <scope>INTERACTION WITH NFE2L1 AND NFE2L2</scope>
    <scope>TISSUE SPECIFICITY</scope>
</reference>
<reference key="2">
    <citation type="journal article" date="2004" name="Nat. Genet.">
        <title>Complete sequencing and characterization of 21,243 full-length human cDNAs.</title>
        <authorList>
            <person name="Ota T."/>
            <person name="Suzuki Y."/>
            <person name="Nishikawa T."/>
            <person name="Otsuki T."/>
            <person name="Sugiyama T."/>
            <person name="Irie R."/>
            <person name="Wakamatsu A."/>
            <person name="Hayashi K."/>
            <person name="Sato H."/>
            <person name="Nagai K."/>
            <person name="Kimura K."/>
            <person name="Makita H."/>
            <person name="Sekine M."/>
            <person name="Obayashi M."/>
            <person name="Nishi T."/>
            <person name="Shibahara T."/>
            <person name="Tanaka T."/>
            <person name="Ishii S."/>
            <person name="Yamamoto J."/>
            <person name="Saito K."/>
            <person name="Kawai Y."/>
            <person name="Isono Y."/>
            <person name="Nakamura Y."/>
            <person name="Nagahari K."/>
            <person name="Murakami K."/>
            <person name="Yasuda T."/>
            <person name="Iwayanagi T."/>
            <person name="Wagatsuma M."/>
            <person name="Shiratori A."/>
            <person name="Sudo H."/>
            <person name="Hosoiri T."/>
            <person name="Kaku Y."/>
            <person name="Kodaira H."/>
            <person name="Kondo H."/>
            <person name="Sugawara M."/>
            <person name="Takahashi M."/>
            <person name="Kanda K."/>
            <person name="Yokoi T."/>
            <person name="Furuya T."/>
            <person name="Kikkawa E."/>
            <person name="Omura Y."/>
            <person name="Abe K."/>
            <person name="Kamihara K."/>
            <person name="Katsuta N."/>
            <person name="Sato K."/>
            <person name="Tanikawa M."/>
            <person name="Yamazaki M."/>
            <person name="Ninomiya K."/>
            <person name="Ishibashi T."/>
            <person name="Yamashita H."/>
            <person name="Murakawa K."/>
            <person name="Fujimori K."/>
            <person name="Tanai H."/>
            <person name="Kimata M."/>
            <person name="Watanabe M."/>
            <person name="Hiraoka S."/>
            <person name="Chiba Y."/>
            <person name="Ishida S."/>
            <person name="Ono Y."/>
            <person name="Takiguchi S."/>
            <person name="Watanabe S."/>
            <person name="Yosida M."/>
            <person name="Hotuta T."/>
            <person name="Kusano J."/>
            <person name="Kanehori K."/>
            <person name="Takahashi-Fujii A."/>
            <person name="Hara H."/>
            <person name="Tanase T.-O."/>
            <person name="Nomura Y."/>
            <person name="Togiya S."/>
            <person name="Komai F."/>
            <person name="Hara R."/>
            <person name="Takeuchi K."/>
            <person name="Arita M."/>
            <person name="Imose N."/>
            <person name="Musashino K."/>
            <person name="Yuuki H."/>
            <person name="Oshima A."/>
            <person name="Sasaki N."/>
            <person name="Aotsuka S."/>
            <person name="Yoshikawa Y."/>
            <person name="Matsunawa H."/>
            <person name="Ichihara T."/>
            <person name="Shiohata N."/>
            <person name="Sano S."/>
            <person name="Moriya S."/>
            <person name="Momiyama H."/>
            <person name="Satoh N."/>
            <person name="Takami S."/>
            <person name="Terashima Y."/>
            <person name="Suzuki O."/>
            <person name="Nakagawa S."/>
            <person name="Senoh A."/>
            <person name="Mizoguchi H."/>
            <person name="Goto Y."/>
            <person name="Shimizu F."/>
            <person name="Wakebe H."/>
            <person name="Hishigaki H."/>
            <person name="Watanabe T."/>
            <person name="Sugiyama A."/>
            <person name="Takemoto M."/>
            <person name="Kawakami B."/>
            <person name="Yamazaki M."/>
            <person name="Watanabe K."/>
            <person name="Kumagai A."/>
            <person name="Itakura S."/>
            <person name="Fukuzumi Y."/>
            <person name="Fujimori Y."/>
            <person name="Komiyama M."/>
            <person name="Tashiro H."/>
            <person name="Tanigami A."/>
            <person name="Fujiwara T."/>
            <person name="Ono T."/>
            <person name="Yamada K."/>
            <person name="Fujii Y."/>
            <person name="Ozaki K."/>
            <person name="Hirao M."/>
            <person name="Ohmori Y."/>
            <person name="Kawabata A."/>
            <person name="Hikiji T."/>
            <person name="Kobatake N."/>
            <person name="Inagaki H."/>
            <person name="Ikema Y."/>
            <person name="Okamoto S."/>
            <person name="Okitani R."/>
            <person name="Kawakami T."/>
            <person name="Noguchi S."/>
            <person name="Itoh T."/>
            <person name="Shigeta K."/>
            <person name="Senba T."/>
            <person name="Matsumura K."/>
            <person name="Nakajima Y."/>
            <person name="Mizuno T."/>
            <person name="Morinaga M."/>
            <person name="Sasaki M."/>
            <person name="Togashi T."/>
            <person name="Oyama M."/>
            <person name="Hata H."/>
            <person name="Watanabe M."/>
            <person name="Komatsu T."/>
            <person name="Mizushima-Sugano J."/>
            <person name="Satoh T."/>
            <person name="Shirai Y."/>
            <person name="Takahashi Y."/>
            <person name="Nakagawa K."/>
            <person name="Okumura K."/>
            <person name="Nagase T."/>
            <person name="Nomura N."/>
            <person name="Kikuchi H."/>
            <person name="Masuho Y."/>
            <person name="Yamashita R."/>
            <person name="Nakai K."/>
            <person name="Yada T."/>
            <person name="Nakamura Y."/>
            <person name="Ohara O."/>
            <person name="Isogai T."/>
            <person name="Sugano S."/>
        </authorList>
    </citation>
    <scope>NUCLEOTIDE SEQUENCE [LARGE SCALE MRNA]</scope>
    <source>
        <tissue>Placenta</tissue>
    </source>
</reference>
<reference key="3">
    <citation type="journal article" date="2003" name="Nature">
        <title>The DNA sequence of human chromosome 7.</title>
        <authorList>
            <person name="Hillier L.W."/>
            <person name="Fulton R.S."/>
            <person name="Fulton L.A."/>
            <person name="Graves T.A."/>
            <person name="Pepin K.H."/>
            <person name="Wagner-McPherson C."/>
            <person name="Layman D."/>
            <person name="Maas J."/>
            <person name="Jaeger S."/>
            <person name="Walker R."/>
            <person name="Wylie K."/>
            <person name="Sekhon M."/>
            <person name="Becker M.C."/>
            <person name="O'Laughlin M.D."/>
            <person name="Schaller M.E."/>
            <person name="Fewell G.A."/>
            <person name="Delehaunty K.D."/>
            <person name="Miner T.L."/>
            <person name="Nash W.E."/>
            <person name="Cordes M."/>
            <person name="Du H."/>
            <person name="Sun H."/>
            <person name="Edwards J."/>
            <person name="Bradshaw-Cordum H."/>
            <person name="Ali J."/>
            <person name="Andrews S."/>
            <person name="Isak A."/>
            <person name="Vanbrunt A."/>
            <person name="Nguyen C."/>
            <person name="Du F."/>
            <person name="Lamar B."/>
            <person name="Courtney L."/>
            <person name="Kalicki J."/>
            <person name="Ozersky P."/>
            <person name="Bielicki L."/>
            <person name="Scott K."/>
            <person name="Holmes A."/>
            <person name="Harkins R."/>
            <person name="Harris A."/>
            <person name="Strong C.M."/>
            <person name="Hou S."/>
            <person name="Tomlinson C."/>
            <person name="Dauphin-Kohlberg S."/>
            <person name="Kozlowicz-Reilly A."/>
            <person name="Leonard S."/>
            <person name="Rohlfing T."/>
            <person name="Rock S.M."/>
            <person name="Tin-Wollam A.-M."/>
            <person name="Abbott A."/>
            <person name="Minx P."/>
            <person name="Maupin R."/>
            <person name="Strowmatt C."/>
            <person name="Latreille P."/>
            <person name="Miller N."/>
            <person name="Johnson D."/>
            <person name="Murray J."/>
            <person name="Woessner J.P."/>
            <person name="Wendl M.C."/>
            <person name="Yang S.-P."/>
            <person name="Schultz B.R."/>
            <person name="Wallis J.W."/>
            <person name="Spieth J."/>
            <person name="Bieri T.A."/>
            <person name="Nelson J.O."/>
            <person name="Berkowicz N."/>
            <person name="Wohldmann P.E."/>
            <person name="Cook L.L."/>
            <person name="Hickenbotham M.T."/>
            <person name="Eldred J."/>
            <person name="Williams D."/>
            <person name="Bedell J.A."/>
            <person name="Mardis E.R."/>
            <person name="Clifton S.W."/>
            <person name="Chissoe S.L."/>
            <person name="Marra M.A."/>
            <person name="Raymond C."/>
            <person name="Haugen E."/>
            <person name="Gillett W."/>
            <person name="Zhou Y."/>
            <person name="James R."/>
            <person name="Phelps K."/>
            <person name="Iadanoto S."/>
            <person name="Bubb K."/>
            <person name="Simms E."/>
            <person name="Levy R."/>
            <person name="Clendenning J."/>
            <person name="Kaul R."/>
            <person name="Kent W.J."/>
            <person name="Furey T.S."/>
            <person name="Baertsch R.A."/>
            <person name="Brent M.R."/>
            <person name="Keibler E."/>
            <person name="Flicek P."/>
            <person name="Bork P."/>
            <person name="Suyama M."/>
            <person name="Bailey J.A."/>
            <person name="Portnoy M.E."/>
            <person name="Torrents D."/>
            <person name="Chinwalla A.T."/>
            <person name="Gish W.R."/>
            <person name="Eddy S.R."/>
            <person name="McPherson J.D."/>
            <person name="Olson M.V."/>
            <person name="Eichler E.E."/>
            <person name="Green E.D."/>
            <person name="Waterston R.H."/>
            <person name="Wilson R.K."/>
        </authorList>
    </citation>
    <scope>NUCLEOTIDE SEQUENCE [LARGE SCALE GENOMIC DNA]</scope>
</reference>
<reference key="4">
    <citation type="journal article" date="2003" name="Science">
        <title>Human chromosome 7: DNA sequence and biology.</title>
        <authorList>
            <person name="Scherer S.W."/>
            <person name="Cheung J."/>
            <person name="MacDonald J.R."/>
            <person name="Osborne L.R."/>
            <person name="Nakabayashi K."/>
            <person name="Herbrick J.-A."/>
            <person name="Carson A.R."/>
            <person name="Parker-Katiraee L."/>
            <person name="Skaug J."/>
            <person name="Khaja R."/>
            <person name="Zhang J."/>
            <person name="Hudek A.K."/>
            <person name="Li M."/>
            <person name="Haddad M."/>
            <person name="Duggan G.E."/>
            <person name="Fernandez B.A."/>
            <person name="Kanematsu E."/>
            <person name="Gentles S."/>
            <person name="Christopoulos C.C."/>
            <person name="Choufani S."/>
            <person name="Kwasnicka D."/>
            <person name="Zheng X.H."/>
            <person name="Lai Z."/>
            <person name="Nusskern D.R."/>
            <person name="Zhang Q."/>
            <person name="Gu Z."/>
            <person name="Lu F."/>
            <person name="Zeesman S."/>
            <person name="Nowaczyk M.J."/>
            <person name="Teshima I."/>
            <person name="Chitayat D."/>
            <person name="Shuman C."/>
            <person name="Weksberg R."/>
            <person name="Zackai E.H."/>
            <person name="Grebe T.A."/>
            <person name="Cox S.R."/>
            <person name="Kirkpatrick S.J."/>
            <person name="Rahman N."/>
            <person name="Friedman J.M."/>
            <person name="Heng H.H.Q."/>
            <person name="Pelicci P.G."/>
            <person name="Lo-Coco F."/>
            <person name="Belloni E."/>
            <person name="Shaffer L.G."/>
            <person name="Pober B."/>
            <person name="Morton C.C."/>
            <person name="Gusella J.F."/>
            <person name="Bruns G.A.P."/>
            <person name="Korf B.R."/>
            <person name="Quade B.J."/>
            <person name="Ligon A.H."/>
            <person name="Ferguson H."/>
            <person name="Higgins A.W."/>
            <person name="Leach N.T."/>
            <person name="Herrick S.R."/>
            <person name="Lemyre E."/>
            <person name="Farra C.G."/>
            <person name="Kim H.-G."/>
            <person name="Summers A.M."/>
            <person name="Gripp K.W."/>
            <person name="Roberts W."/>
            <person name="Szatmari P."/>
            <person name="Winsor E.J.T."/>
            <person name="Grzeschik K.-H."/>
            <person name="Teebi A."/>
            <person name="Minassian B.A."/>
            <person name="Kere J."/>
            <person name="Armengol L."/>
            <person name="Pujana M.A."/>
            <person name="Estivill X."/>
            <person name="Wilson M.D."/>
            <person name="Koop B.F."/>
            <person name="Tosi S."/>
            <person name="Moore G.E."/>
            <person name="Boright A.P."/>
            <person name="Zlotorynski E."/>
            <person name="Kerem B."/>
            <person name="Kroisel P.M."/>
            <person name="Petek E."/>
            <person name="Oscier D.G."/>
            <person name="Mould S.J."/>
            <person name="Doehner H."/>
            <person name="Doehner K."/>
            <person name="Rommens J.M."/>
            <person name="Vincent J.B."/>
            <person name="Venter J.C."/>
            <person name="Li P.W."/>
            <person name="Mural R.J."/>
            <person name="Adams M.D."/>
            <person name="Tsui L.-C."/>
        </authorList>
    </citation>
    <scope>NUCLEOTIDE SEQUENCE [LARGE SCALE GENOMIC DNA]</scope>
</reference>
<reference key="5">
    <citation type="submission" date="2005-07" db="EMBL/GenBank/DDBJ databases">
        <authorList>
            <person name="Mural R.J."/>
            <person name="Istrail S."/>
            <person name="Sutton G."/>
            <person name="Florea L."/>
            <person name="Halpern A.L."/>
            <person name="Mobarry C.M."/>
            <person name="Lippert R."/>
            <person name="Walenz B."/>
            <person name="Shatkay H."/>
            <person name="Dew I."/>
            <person name="Miller J.R."/>
            <person name="Flanigan M.J."/>
            <person name="Edwards N.J."/>
            <person name="Bolanos R."/>
            <person name="Fasulo D."/>
            <person name="Halldorsson B.V."/>
            <person name="Hannenhalli S."/>
            <person name="Turner R."/>
            <person name="Yooseph S."/>
            <person name="Lu F."/>
            <person name="Nusskern D.R."/>
            <person name="Shue B.C."/>
            <person name="Zheng X.H."/>
            <person name="Zhong F."/>
            <person name="Delcher A.L."/>
            <person name="Huson D.H."/>
            <person name="Kravitz S.A."/>
            <person name="Mouchard L."/>
            <person name="Reinert K."/>
            <person name="Remington K.A."/>
            <person name="Clark A.G."/>
            <person name="Waterman M.S."/>
            <person name="Eichler E.E."/>
            <person name="Adams M.D."/>
            <person name="Hunkapiller M.W."/>
            <person name="Myers E.W."/>
            <person name="Venter J.C."/>
        </authorList>
    </citation>
    <scope>NUCLEOTIDE SEQUENCE [LARGE SCALE GENOMIC DNA]</scope>
</reference>
<reference key="6">
    <citation type="journal article" date="2004" name="Genome Res.">
        <title>The status, quality, and expansion of the NIH full-length cDNA project: the Mammalian Gene Collection (MGC).</title>
        <authorList>
            <consortium name="The MGC Project Team"/>
        </authorList>
    </citation>
    <scope>NUCLEOTIDE SEQUENCE [LARGE SCALE MRNA]</scope>
</reference>
<reference key="7">
    <citation type="journal article" date="1996" name="Nucleic Acids Res.">
        <title>Small Maf proteins interact with the human transcription factor TCF11/Nrf1/LCR-F1.</title>
        <authorList>
            <person name="Johnsen O."/>
            <person name="Skammelsrud N."/>
            <person name="Luna L."/>
            <person name="Nishizawa M."/>
            <person name="Prydz H."/>
            <person name="Kolstoe A.B."/>
        </authorList>
    </citation>
    <scope>FUNCTION</scope>
    <scope>DNA-BINDING</scope>
    <scope>INTERACTION WITH NFE2L1</scope>
</reference>
<reference key="8">
    <citation type="journal article" date="2008" name="Mol. Cell">
        <title>Kinase-selective enrichment enables quantitative phosphoproteomics of the kinome across the cell cycle.</title>
        <authorList>
            <person name="Daub H."/>
            <person name="Olsen J.V."/>
            <person name="Bairlein M."/>
            <person name="Gnad F."/>
            <person name="Oppermann F.S."/>
            <person name="Korner R."/>
            <person name="Greff Z."/>
            <person name="Keri G."/>
            <person name="Stemmann O."/>
            <person name="Mann M."/>
        </authorList>
    </citation>
    <scope>PHOSPHORYLATION [LARGE SCALE ANALYSIS] AT SER-25</scope>
    <scope>IDENTIFICATION BY MASS SPECTROMETRY [LARGE SCALE ANALYSIS]</scope>
    <source>
        <tissue>Cervix carcinoma</tissue>
    </source>
</reference>
<reference key="9">
    <citation type="journal article" date="2008" name="Proc. Natl. Acad. Sci. U.S.A.">
        <title>A quantitative atlas of mitotic phosphorylation.</title>
        <authorList>
            <person name="Dephoure N."/>
            <person name="Zhou C."/>
            <person name="Villen J."/>
            <person name="Beausoleil S.A."/>
            <person name="Bakalarski C.E."/>
            <person name="Elledge S.J."/>
            <person name="Gygi S.P."/>
        </authorList>
    </citation>
    <scope>PHOSPHORYLATION [LARGE SCALE ANALYSIS] AT SER-25</scope>
    <scope>IDENTIFICATION BY MASS SPECTROMETRY [LARGE SCALE ANALYSIS]</scope>
    <source>
        <tissue>Cervix carcinoma</tissue>
    </source>
</reference>
<reference key="10">
    <citation type="journal article" date="2009" name="Sci. Signal.">
        <title>Quantitative phosphoproteomic analysis of T cell receptor signaling reveals system-wide modulation of protein-protein interactions.</title>
        <authorList>
            <person name="Mayya V."/>
            <person name="Lundgren D.H."/>
            <person name="Hwang S.-I."/>
            <person name="Rezaul K."/>
            <person name="Wu L."/>
            <person name="Eng J.K."/>
            <person name="Rodionov V."/>
            <person name="Han D.K."/>
        </authorList>
    </citation>
    <scope>PHOSPHORYLATION [LARGE SCALE ANALYSIS] AT SER-25</scope>
    <scope>IDENTIFICATION BY MASS SPECTROMETRY [LARGE SCALE ANALYSIS]</scope>
    <source>
        <tissue>Leukemic T-cell</tissue>
    </source>
</reference>
<reference key="11">
    <citation type="journal article" date="2010" name="Sci. Signal.">
        <title>Quantitative phosphoproteomics reveals widespread full phosphorylation site occupancy during mitosis.</title>
        <authorList>
            <person name="Olsen J.V."/>
            <person name="Vermeulen M."/>
            <person name="Santamaria A."/>
            <person name="Kumar C."/>
            <person name="Miller M.L."/>
            <person name="Jensen L.J."/>
            <person name="Gnad F."/>
            <person name="Cox J."/>
            <person name="Jensen T.S."/>
            <person name="Nigg E.A."/>
            <person name="Brunak S."/>
            <person name="Mann M."/>
        </authorList>
    </citation>
    <scope>PHOSPHORYLATION [LARGE SCALE ANALYSIS] AT SER-25</scope>
    <scope>IDENTIFICATION BY MASS SPECTROMETRY [LARGE SCALE ANALYSIS]</scope>
    <source>
        <tissue>Cervix carcinoma</tissue>
    </source>
</reference>
<reference key="12">
    <citation type="journal article" date="2013" name="J. Proteome Res.">
        <title>Toward a comprehensive characterization of a human cancer cell phosphoproteome.</title>
        <authorList>
            <person name="Zhou H."/>
            <person name="Di Palma S."/>
            <person name="Preisinger C."/>
            <person name="Peng M."/>
            <person name="Polat A.N."/>
            <person name="Heck A.J."/>
            <person name="Mohammed S."/>
        </authorList>
    </citation>
    <scope>PHOSPHORYLATION [LARGE SCALE ANALYSIS] AT SER-25</scope>
    <scope>IDENTIFICATION BY MASS SPECTROMETRY [LARGE SCALE ANALYSIS]</scope>
    <source>
        <tissue>Cervix carcinoma</tissue>
    </source>
</reference>
<reference key="13">
    <citation type="journal article" date="2017" name="Nat. Struct. Mol. Biol.">
        <title>Site-specific mapping of the human SUMO proteome reveals co-modification with phosphorylation.</title>
        <authorList>
            <person name="Hendriks I.A."/>
            <person name="Lyon D."/>
            <person name="Young C."/>
            <person name="Jensen L.J."/>
            <person name="Vertegaal A.C."/>
            <person name="Nielsen M.L."/>
        </authorList>
    </citation>
    <scope>SUMOYLATION [LARGE SCALE ANALYSIS] AT LYS-130</scope>
    <scope>IDENTIFICATION BY MASS SPECTROMETRY [LARGE SCALE ANALYSIS]</scope>
</reference>
<organism>
    <name type="scientific">Homo sapiens</name>
    <name type="common">Human</name>
    <dbReference type="NCBI Taxonomy" id="9606"/>
    <lineage>
        <taxon>Eukaryota</taxon>
        <taxon>Metazoa</taxon>
        <taxon>Chordata</taxon>
        <taxon>Craniata</taxon>
        <taxon>Vertebrata</taxon>
        <taxon>Euteleostomi</taxon>
        <taxon>Mammalia</taxon>
        <taxon>Eutheria</taxon>
        <taxon>Euarchontoglires</taxon>
        <taxon>Primates</taxon>
        <taxon>Haplorrhini</taxon>
        <taxon>Catarrhini</taxon>
        <taxon>Hominidae</taxon>
        <taxon>Homo</taxon>
    </lineage>
</organism>
<evidence type="ECO:0000255" key="1">
    <source>
        <dbReference type="PROSITE-ProRule" id="PRU00978"/>
    </source>
</evidence>
<evidence type="ECO:0000269" key="2">
    <source>
    </source>
</evidence>
<evidence type="ECO:0000269" key="3">
    <source>
    </source>
</evidence>
<evidence type="ECO:0000305" key="4"/>
<evidence type="ECO:0007744" key="5">
    <source>
    </source>
</evidence>
<evidence type="ECO:0007744" key="6">
    <source>
    </source>
</evidence>
<evidence type="ECO:0007744" key="7">
    <source>
    </source>
</evidence>
<evidence type="ECO:0007744" key="8">
    <source>
    </source>
</evidence>
<evidence type="ECO:0007744" key="9">
    <source>
    </source>
</evidence>
<evidence type="ECO:0007744" key="10">
    <source>
    </source>
</evidence>
<gene>
    <name type="primary">MAFK</name>
</gene>
<protein>
    <recommendedName>
        <fullName>Transcription factor MafK</fullName>
    </recommendedName>
    <alternativeName>
        <fullName>Erythroid transcription factor NF-E2 p18 subunit</fullName>
    </alternativeName>
</protein>
<proteinExistence type="evidence at protein level"/>
<accession>O60675</accession>
<accession>A4D214</accession>
<name>MAFK_HUMAN</name>
<dbReference type="EMBL" id="AF059194">
    <property type="protein sequence ID" value="AAC14426.1"/>
    <property type="molecule type" value="mRNA"/>
</dbReference>
<dbReference type="EMBL" id="AK092414">
    <property type="protein sequence ID" value="BAG52549.1"/>
    <property type="molecule type" value="mRNA"/>
</dbReference>
<dbReference type="EMBL" id="AC093734">
    <property type="protein sequence ID" value="AAP21866.1"/>
    <property type="molecule type" value="Genomic_DNA"/>
</dbReference>
<dbReference type="EMBL" id="CH236953">
    <property type="protein sequence ID" value="EAL23943.1"/>
    <property type="molecule type" value="Genomic_DNA"/>
</dbReference>
<dbReference type="EMBL" id="CH471144">
    <property type="protein sequence ID" value="EAW87207.1"/>
    <property type="molecule type" value="Genomic_DNA"/>
</dbReference>
<dbReference type="EMBL" id="BC148265">
    <property type="protein sequence ID" value="AAI48266.1"/>
    <property type="molecule type" value="mRNA"/>
</dbReference>
<dbReference type="CCDS" id="CCDS5325.1"/>
<dbReference type="RefSeq" id="NP_002351.1">
    <property type="nucleotide sequence ID" value="NM_002360.4"/>
</dbReference>
<dbReference type="RefSeq" id="XP_005249908.2">
    <property type="nucleotide sequence ID" value="XM_005249851.3"/>
</dbReference>
<dbReference type="RefSeq" id="XP_006715836.1">
    <property type="nucleotide sequence ID" value="XM_006715773.3"/>
</dbReference>
<dbReference type="RefSeq" id="XP_054214978.1">
    <property type="nucleotide sequence ID" value="XM_054359003.1"/>
</dbReference>
<dbReference type="SMR" id="O60675"/>
<dbReference type="BioGRID" id="113688">
    <property type="interactions" value="33"/>
</dbReference>
<dbReference type="ComplexPortal" id="CPX-2482">
    <property type="entry name" value="bZIP transcription factor complex, BACH2-MAFK"/>
</dbReference>
<dbReference type="ComplexPortal" id="CPX-2493">
    <property type="entry name" value="bZIP transcription factor complex, BACH1-MAFK"/>
</dbReference>
<dbReference type="FunCoup" id="O60675">
    <property type="interactions" value="4996"/>
</dbReference>
<dbReference type="IntAct" id="O60675">
    <property type="interactions" value="13"/>
</dbReference>
<dbReference type="STRING" id="9606.ENSP00000344903"/>
<dbReference type="ChEMBL" id="CHEMBL2346484"/>
<dbReference type="GlyCosmos" id="O60675">
    <property type="glycosylation" value="10 sites, 2 glycans"/>
</dbReference>
<dbReference type="GlyGen" id="O60675">
    <property type="glycosylation" value="12 sites, 2 O-linked glycans (12 sites)"/>
</dbReference>
<dbReference type="iPTMnet" id="O60675"/>
<dbReference type="PhosphoSitePlus" id="O60675"/>
<dbReference type="BioMuta" id="MAFK"/>
<dbReference type="jPOST" id="O60675"/>
<dbReference type="MassIVE" id="O60675"/>
<dbReference type="PaxDb" id="9606-ENSP00000344903"/>
<dbReference type="PeptideAtlas" id="O60675"/>
<dbReference type="ProteomicsDB" id="49520"/>
<dbReference type="Pumba" id="O60675"/>
<dbReference type="Antibodypedia" id="24241">
    <property type="antibodies" value="160 antibodies from 25 providers"/>
</dbReference>
<dbReference type="DNASU" id="7975"/>
<dbReference type="Ensembl" id="ENST00000343242.9">
    <property type="protein sequence ID" value="ENSP00000344903.4"/>
    <property type="gene ID" value="ENSG00000198517.10"/>
</dbReference>
<dbReference type="Ensembl" id="ENST00000403150.5">
    <property type="protein sequence ID" value="ENSP00000386009.1"/>
    <property type="gene ID" value="ENSG00000198517.10"/>
</dbReference>
<dbReference type="Ensembl" id="ENST00000406174.2">
    <property type="protein sequence ID" value="ENSP00000385437.2"/>
    <property type="gene ID" value="ENSG00000198517.10"/>
</dbReference>
<dbReference type="GeneID" id="7975"/>
<dbReference type="KEGG" id="hsa:7975"/>
<dbReference type="MANE-Select" id="ENST00000343242.9">
    <property type="protein sequence ID" value="ENSP00000344903.4"/>
    <property type="RefSeq nucleotide sequence ID" value="NM_002360.4"/>
    <property type="RefSeq protein sequence ID" value="NP_002351.1"/>
</dbReference>
<dbReference type="UCSC" id="uc003skr.4">
    <property type="organism name" value="human"/>
</dbReference>
<dbReference type="AGR" id="HGNC:6782"/>
<dbReference type="CTD" id="7975"/>
<dbReference type="DisGeNET" id="7975"/>
<dbReference type="GeneCards" id="MAFK"/>
<dbReference type="HGNC" id="HGNC:6782">
    <property type="gene designation" value="MAFK"/>
</dbReference>
<dbReference type="HPA" id="ENSG00000198517">
    <property type="expression patterns" value="Low tissue specificity"/>
</dbReference>
<dbReference type="MIM" id="600197">
    <property type="type" value="gene"/>
</dbReference>
<dbReference type="neXtProt" id="NX_O60675"/>
<dbReference type="OpenTargets" id="ENSG00000198517"/>
<dbReference type="PharmGKB" id="PA30540"/>
<dbReference type="VEuPathDB" id="HostDB:ENSG00000198517"/>
<dbReference type="eggNOG" id="KOG4196">
    <property type="taxonomic scope" value="Eukaryota"/>
</dbReference>
<dbReference type="GeneTree" id="ENSGT00940000160044"/>
<dbReference type="HOGENOM" id="CLU_112948_0_0_1"/>
<dbReference type="InParanoid" id="O60675"/>
<dbReference type="OMA" id="RSIKMDP"/>
<dbReference type="OrthoDB" id="5974330at2759"/>
<dbReference type="PAN-GO" id="O60675">
    <property type="GO annotations" value="4 GO annotations based on evolutionary models"/>
</dbReference>
<dbReference type="PhylomeDB" id="O60675"/>
<dbReference type="TreeFam" id="TF325689"/>
<dbReference type="PathwayCommons" id="O60675"/>
<dbReference type="Reactome" id="R-HSA-9707587">
    <property type="pathway name" value="Regulation of HMOX1 expression and activity"/>
</dbReference>
<dbReference type="Reactome" id="R-HSA-9707616">
    <property type="pathway name" value="Heme signaling"/>
</dbReference>
<dbReference type="Reactome" id="R-HSA-9708530">
    <property type="pathway name" value="Regulation of BACH1 activity"/>
</dbReference>
<dbReference type="Reactome" id="R-HSA-9759194">
    <property type="pathway name" value="Nuclear events mediated by NFE2L2"/>
</dbReference>
<dbReference type="Reactome" id="R-HSA-9818026">
    <property type="pathway name" value="NFE2L2 regulating inflammation associated genes"/>
</dbReference>
<dbReference type="Reactome" id="R-HSA-9818027">
    <property type="pathway name" value="NFE2L2 regulating anti-oxidant/detoxification enzymes"/>
</dbReference>
<dbReference type="Reactome" id="R-HSA-9818030">
    <property type="pathway name" value="NFE2L2 regulating tumorigenic genes"/>
</dbReference>
<dbReference type="Reactome" id="R-HSA-9818032">
    <property type="pathway name" value="NFE2L2 regulating MDR associated enzymes"/>
</dbReference>
<dbReference type="Reactome" id="R-HSA-9818035">
    <property type="pathway name" value="NFE2L2 regulating ER-stress associated genes"/>
</dbReference>
<dbReference type="Reactome" id="R-HSA-9818749">
    <property type="pathway name" value="Regulation of NFE2L2 gene expression"/>
</dbReference>
<dbReference type="Reactome" id="R-HSA-983231">
    <property type="pathway name" value="Factors involved in megakaryocyte development and platelet production"/>
</dbReference>
<dbReference type="SignaLink" id="O60675"/>
<dbReference type="SIGNOR" id="O60675"/>
<dbReference type="BioGRID-ORCS" id="7975">
    <property type="hits" value="28 hits in 1184 CRISPR screens"/>
</dbReference>
<dbReference type="ChiTaRS" id="MAFK">
    <property type="organism name" value="human"/>
</dbReference>
<dbReference type="GeneWiki" id="MAFK"/>
<dbReference type="GenomeRNAi" id="7975"/>
<dbReference type="Pharos" id="O60675">
    <property type="development level" value="Tbio"/>
</dbReference>
<dbReference type="PRO" id="PR:O60675"/>
<dbReference type="Proteomes" id="UP000005640">
    <property type="component" value="Chromosome 7"/>
</dbReference>
<dbReference type="RNAct" id="O60675">
    <property type="molecule type" value="protein"/>
</dbReference>
<dbReference type="Bgee" id="ENSG00000198517">
    <property type="expression patterns" value="Expressed in apex of heart and 174 other cell types or tissues"/>
</dbReference>
<dbReference type="ExpressionAtlas" id="O60675">
    <property type="expression patterns" value="baseline and differential"/>
</dbReference>
<dbReference type="GO" id="GO:0000785">
    <property type="term" value="C:chromatin"/>
    <property type="evidence" value="ECO:0000247"/>
    <property type="project" value="NTNU_SB"/>
</dbReference>
<dbReference type="GO" id="GO:0005654">
    <property type="term" value="C:nucleoplasm"/>
    <property type="evidence" value="ECO:0000314"/>
    <property type="project" value="HPA"/>
</dbReference>
<dbReference type="GO" id="GO:0005634">
    <property type="term" value="C:nucleus"/>
    <property type="evidence" value="ECO:0000318"/>
    <property type="project" value="GO_Central"/>
</dbReference>
<dbReference type="GO" id="GO:0090575">
    <property type="term" value="C:RNA polymerase II transcription regulator complex"/>
    <property type="evidence" value="ECO:0000250"/>
    <property type="project" value="ComplexPortal"/>
</dbReference>
<dbReference type="GO" id="GO:0003700">
    <property type="term" value="F:DNA-binding transcription factor activity"/>
    <property type="evidence" value="ECO:0000250"/>
    <property type="project" value="UniProtKB"/>
</dbReference>
<dbReference type="GO" id="GO:0000981">
    <property type="term" value="F:DNA-binding transcription factor activity, RNA polymerase II-specific"/>
    <property type="evidence" value="ECO:0000247"/>
    <property type="project" value="NTNU_SB"/>
</dbReference>
<dbReference type="GO" id="GO:0001227">
    <property type="term" value="F:DNA-binding transcription repressor activity, RNA polymerase II-specific"/>
    <property type="evidence" value="ECO:0000314"/>
    <property type="project" value="NTNU_SB"/>
</dbReference>
<dbReference type="GO" id="GO:0000978">
    <property type="term" value="F:RNA polymerase II cis-regulatory region sequence-specific DNA binding"/>
    <property type="evidence" value="ECO:0000318"/>
    <property type="project" value="GO_Central"/>
</dbReference>
<dbReference type="GO" id="GO:0043565">
    <property type="term" value="F:sequence-specific DNA binding"/>
    <property type="evidence" value="ECO:0000314"/>
    <property type="project" value="NTNU_SB"/>
</dbReference>
<dbReference type="GO" id="GO:0000976">
    <property type="term" value="F:transcription cis-regulatory region binding"/>
    <property type="evidence" value="ECO:0000250"/>
    <property type="project" value="UniProtKB"/>
</dbReference>
<dbReference type="GO" id="GO:0000122">
    <property type="term" value="P:negative regulation of transcription by RNA polymerase II"/>
    <property type="evidence" value="ECO:0000314"/>
    <property type="project" value="NTNU_SB"/>
</dbReference>
<dbReference type="GO" id="GO:0006357">
    <property type="term" value="P:regulation of transcription by RNA polymerase II"/>
    <property type="evidence" value="ECO:0000318"/>
    <property type="project" value="GO_Central"/>
</dbReference>
<dbReference type="CDD" id="cd14717">
    <property type="entry name" value="bZIP_Maf_small"/>
    <property type="match status" value="1"/>
</dbReference>
<dbReference type="FunFam" id="1.20.5.170:FF:000011">
    <property type="entry name" value="Transcription factor MafG, putative"/>
    <property type="match status" value="1"/>
</dbReference>
<dbReference type="Gene3D" id="1.20.5.170">
    <property type="match status" value="1"/>
</dbReference>
<dbReference type="InterPro" id="IPR004827">
    <property type="entry name" value="bZIP"/>
</dbReference>
<dbReference type="InterPro" id="IPR004826">
    <property type="entry name" value="bZIP_Maf"/>
</dbReference>
<dbReference type="InterPro" id="IPR046347">
    <property type="entry name" value="bZIP_sf"/>
</dbReference>
<dbReference type="InterPro" id="IPR008917">
    <property type="entry name" value="TF_DNA-bd_sf"/>
</dbReference>
<dbReference type="InterPro" id="IPR024874">
    <property type="entry name" value="Transcription_factor_Maf_fam"/>
</dbReference>
<dbReference type="PANTHER" id="PTHR10129">
    <property type="entry name" value="TRANSCRIPTION FACTOR MAF"/>
    <property type="match status" value="1"/>
</dbReference>
<dbReference type="PANTHER" id="PTHR10129:SF26">
    <property type="entry name" value="TRANSCRIPTION FACTOR MAFK"/>
    <property type="match status" value="1"/>
</dbReference>
<dbReference type="Pfam" id="PF03131">
    <property type="entry name" value="bZIP_Maf"/>
    <property type="match status" value="1"/>
</dbReference>
<dbReference type="SMART" id="SM00338">
    <property type="entry name" value="BRLZ"/>
    <property type="match status" value="1"/>
</dbReference>
<dbReference type="SUPFAM" id="SSF47454">
    <property type="entry name" value="A DNA-binding domain in eukaryotic transcription factors"/>
    <property type="match status" value="1"/>
</dbReference>
<dbReference type="SUPFAM" id="SSF57959">
    <property type="entry name" value="Leucine zipper domain"/>
    <property type="match status" value="1"/>
</dbReference>
<dbReference type="PROSITE" id="PS50217">
    <property type="entry name" value="BZIP"/>
    <property type="match status" value="1"/>
</dbReference>
<sequence length="156" mass="17523">MTTNPKPNKALKVKKEAGENAPVLSDDELVSMSVRELNQHLRGLTKEEVTRLKQRRRTLKNRGYAASCRIKRVTQKEELERQRVELQQEVEKLARENSSMRLELDALRSKYEALQTFARTVARGPVAPSKVATTSVITIVKSTELSSTSVPFSAAS</sequence>
<feature type="chain" id="PRO_0000076503" description="Transcription factor MafK">
    <location>
        <begin position="1"/>
        <end position="156"/>
    </location>
</feature>
<feature type="domain" description="bZIP" evidence="1">
    <location>
        <begin position="51"/>
        <end position="114"/>
    </location>
</feature>
<feature type="region of interest" description="Basic motif" evidence="1">
    <location>
        <begin position="51"/>
        <end position="76"/>
    </location>
</feature>
<feature type="region of interest" description="Leucine-zipper" evidence="1">
    <location>
        <begin position="79"/>
        <end position="93"/>
    </location>
</feature>
<feature type="modified residue" description="Phosphoserine" evidence="5 6 7 8 9">
    <location>
        <position position="25"/>
    </location>
</feature>
<feature type="cross-link" description="Glycyl lysine isopeptide (Lys-Gly) (interchain with G-Cter in SUMO2)" evidence="10">
    <location>
        <position position="130"/>
    </location>
</feature>
<comment type="function">
    <text evidence="2 3">Since they lack a putative transactivation domain, the small Mafs behave as transcriptional repressors when they dimerize among themselves (PubMed:9150357). However, they act as transcriptional activators by dimerizing with other (usually larger) basic-zipper proteins, such as NFE2, NFE2L1/NRF1, NFE2L2/NRF2 and NFE2L3/NRF3, and recruiting them to specific DNA-binding sites (PubMed:8932385, PubMed:9150357). Small Maf proteins heterodimerize with Fos and may act as competitive repressors of the NF-E2 transcription factor (PubMed:9150357).</text>
</comment>
<comment type="subunit">
    <text evidence="2 3">Homodimer or heterodimer. It can form high affinity heterodimers with members of the CNC-bZIP family such as NFE2, NFE2L1/NRF1, NFE2L2/NRF2 and NFE2L3/NRF3 (PubMed:8932385, PubMed:9150357).</text>
</comment>
<comment type="interaction">
    <interactant intactId="EBI-2559512">
        <id>O60675</id>
    </interactant>
    <interactant intactId="EBI-1642333">
        <id>Q9BYV9</id>
        <label>BACH2</label>
    </interactant>
    <organismsDiffer>false</organismsDiffer>
    <experiments>4</experiments>
</comment>
<comment type="interaction">
    <interactant intactId="EBI-2559512">
        <id>O60675</id>
    </interactant>
    <interactant intactId="EBI-2007911">
        <id>Q16236</id>
        <label>NFE2L2</label>
    </interactant>
    <organismsDiffer>false</organismsDiffer>
    <experiments>7</experiments>
</comment>
<comment type="subcellular location">
    <subcellularLocation>
        <location>Nucleus</location>
    </subcellularLocation>
</comment>
<comment type="similarity">
    <text evidence="4">Belongs to the bZIP family. Maf subfamily.</text>
</comment>
<keyword id="KW-0238">DNA-binding</keyword>
<keyword id="KW-1017">Isopeptide bond</keyword>
<keyword id="KW-0539">Nucleus</keyword>
<keyword id="KW-0597">Phosphoprotein</keyword>
<keyword id="KW-1267">Proteomics identification</keyword>
<keyword id="KW-1185">Reference proteome</keyword>
<keyword id="KW-0678">Repressor</keyword>
<keyword id="KW-0804">Transcription</keyword>
<keyword id="KW-0805">Transcription regulation</keyword>
<keyword id="KW-0832">Ubl conjugation</keyword>